<gene>
    <name evidence="5" type="primary">KAO1</name>
    <name evidence="5" type="synonym">CYP88A3</name>
    <name evidence="7" type="ordered locus">At1g05160</name>
    <name evidence="8" type="ORF">YUP8H12.23</name>
</gene>
<accession>O23051</accession>
<accession>Q9C5Y3</accession>
<organism>
    <name type="scientific">Arabidopsis thaliana</name>
    <name type="common">Mouse-ear cress</name>
    <dbReference type="NCBI Taxonomy" id="3702"/>
    <lineage>
        <taxon>Eukaryota</taxon>
        <taxon>Viridiplantae</taxon>
        <taxon>Streptophyta</taxon>
        <taxon>Embryophyta</taxon>
        <taxon>Tracheophyta</taxon>
        <taxon>Spermatophyta</taxon>
        <taxon>Magnoliopsida</taxon>
        <taxon>eudicotyledons</taxon>
        <taxon>Gunneridae</taxon>
        <taxon>Pentapetalae</taxon>
        <taxon>rosids</taxon>
        <taxon>malvids</taxon>
        <taxon>Brassicales</taxon>
        <taxon>Brassicaceae</taxon>
        <taxon>Camelineae</taxon>
        <taxon>Arabidopsis</taxon>
    </lineage>
</organism>
<keyword id="KW-0256">Endoplasmic reticulum</keyword>
<keyword id="KW-0349">Heme</keyword>
<keyword id="KW-0408">Iron</keyword>
<keyword id="KW-0472">Membrane</keyword>
<keyword id="KW-0479">Metal-binding</keyword>
<keyword id="KW-0503">Monooxygenase</keyword>
<keyword id="KW-0560">Oxidoreductase</keyword>
<keyword id="KW-1185">Reference proteome</keyword>
<keyword id="KW-0812">Transmembrane</keyword>
<keyword id="KW-1133">Transmembrane helix</keyword>
<name>KAO1_ARATH</name>
<protein>
    <recommendedName>
        <fullName evidence="5">Ent-kaurenoic acid oxidase 1</fullName>
        <shortName evidence="5">AtKAO1</shortName>
        <ecNumber evidence="3">1.14.14.107</ecNumber>
    </recommendedName>
    <alternativeName>
        <fullName evidence="5">Cytochrome P450 88A3</fullName>
    </alternativeName>
</protein>
<proteinExistence type="evidence at protein level"/>
<reference key="1">
    <citation type="journal article" date="2001" name="Proc. Natl. Acad. Sci. U.S.A.">
        <title>The CYP88A cytochrome P450, ent-kaurenoic acid oxidase, catalyzes three steps of the gibberellin biosynthesis pathway.</title>
        <authorList>
            <person name="Helliwell C.A."/>
            <person name="Chandler P.M."/>
            <person name="Poole A."/>
            <person name="Dennis E.S."/>
            <person name="Peacock J.W."/>
        </authorList>
    </citation>
    <scope>NUCLEOTIDE SEQUENCE [MRNA]</scope>
    <scope>FUNCTION</scope>
    <scope>CATALYTIC ACTIVITY</scope>
    <scope>TISSUE SPECIFICITY</scope>
    <scope>PATHWAY</scope>
    <source>
        <strain>cv. Landsberg erecta</strain>
        <tissue>Silique</tissue>
    </source>
</reference>
<reference key="2">
    <citation type="journal article" date="2000" name="Nature">
        <title>Sequence and analysis of chromosome 1 of the plant Arabidopsis thaliana.</title>
        <authorList>
            <person name="Theologis A."/>
            <person name="Ecker J.R."/>
            <person name="Palm C.J."/>
            <person name="Federspiel N.A."/>
            <person name="Kaul S."/>
            <person name="White O."/>
            <person name="Alonso J."/>
            <person name="Altafi H."/>
            <person name="Araujo R."/>
            <person name="Bowman C.L."/>
            <person name="Brooks S.Y."/>
            <person name="Buehler E."/>
            <person name="Chan A."/>
            <person name="Chao Q."/>
            <person name="Chen H."/>
            <person name="Cheuk R.F."/>
            <person name="Chin C.W."/>
            <person name="Chung M.K."/>
            <person name="Conn L."/>
            <person name="Conway A.B."/>
            <person name="Conway A.R."/>
            <person name="Creasy T.H."/>
            <person name="Dewar K."/>
            <person name="Dunn P."/>
            <person name="Etgu P."/>
            <person name="Feldblyum T.V."/>
            <person name="Feng J.-D."/>
            <person name="Fong B."/>
            <person name="Fujii C.Y."/>
            <person name="Gill J.E."/>
            <person name="Goldsmith A.D."/>
            <person name="Haas B."/>
            <person name="Hansen N.F."/>
            <person name="Hughes B."/>
            <person name="Huizar L."/>
            <person name="Hunter J.L."/>
            <person name="Jenkins J."/>
            <person name="Johnson-Hopson C."/>
            <person name="Khan S."/>
            <person name="Khaykin E."/>
            <person name="Kim C.J."/>
            <person name="Koo H.L."/>
            <person name="Kremenetskaia I."/>
            <person name="Kurtz D.B."/>
            <person name="Kwan A."/>
            <person name="Lam B."/>
            <person name="Langin-Hooper S."/>
            <person name="Lee A."/>
            <person name="Lee J.M."/>
            <person name="Lenz C.A."/>
            <person name="Li J.H."/>
            <person name="Li Y.-P."/>
            <person name="Lin X."/>
            <person name="Liu S.X."/>
            <person name="Liu Z.A."/>
            <person name="Luros J.S."/>
            <person name="Maiti R."/>
            <person name="Marziali A."/>
            <person name="Militscher J."/>
            <person name="Miranda M."/>
            <person name="Nguyen M."/>
            <person name="Nierman W.C."/>
            <person name="Osborne B.I."/>
            <person name="Pai G."/>
            <person name="Peterson J."/>
            <person name="Pham P.K."/>
            <person name="Rizzo M."/>
            <person name="Rooney T."/>
            <person name="Rowley D."/>
            <person name="Sakano H."/>
            <person name="Salzberg S.L."/>
            <person name="Schwartz J.R."/>
            <person name="Shinn P."/>
            <person name="Southwick A.M."/>
            <person name="Sun H."/>
            <person name="Tallon L.J."/>
            <person name="Tambunga G."/>
            <person name="Toriumi M.J."/>
            <person name="Town C.D."/>
            <person name="Utterback T."/>
            <person name="Van Aken S."/>
            <person name="Vaysberg M."/>
            <person name="Vysotskaia V.S."/>
            <person name="Walker M."/>
            <person name="Wu D."/>
            <person name="Yu G."/>
            <person name="Fraser C.M."/>
            <person name="Venter J.C."/>
            <person name="Davis R.W."/>
        </authorList>
    </citation>
    <scope>NUCLEOTIDE SEQUENCE [LARGE SCALE GENOMIC DNA]</scope>
    <source>
        <strain>cv. Columbia</strain>
    </source>
</reference>
<reference key="3">
    <citation type="journal article" date="2017" name="Plant J.">
        <title>Araport11: a complete reannotation of the Arabidopsis thaliana reference genome.</title>
        <authorList>
            <person name="Cheng C.Y."/>
            <person name="Krishnakumar V."/>
            <person name="Chan A.P."/>
            <person name="Thibaud-Nissen F."/>
            <person name="Schobel S."/>
            <person name="Town C.D."/>
        </authorList>
    </citation>
    <scope>GENOME REANNOTATION</scope>
    <source>
        <strain>cv. Columbia</strain>
    </source>
</reference>
<reference key="4">
    <citation type="journal article" date="2001" name="Plant J.">
        <title>A plastid envelope location of Arabidopsis ent-kaurene oxidase links the plastid and endoplasmic reticulum steps of the gibberellin biosynthesis pathway.</title>
        <authorList>
            <person name="Helliwell C.A."/>
            <person name="Sullivan J.A."/>
            <person name="Mould R.M."/>
            <person name="Gray J.C."/>
            <person name="Peacock W.J."/>
            <person name="Dennis E.S."/>
        </authorList>
    </citation>
    <scope>SUBCELLULAR LOCATION</scope>
</reference>
<feature type="chain" id="PRO_0000052178" description="Ent-kaurenoic acid oxidase 1">
    <location>
        <begin position="1"/>
        <end position="490"/>
    </location>
</feature>
<feature type="transmembrane region" description="Helical" evidence="2">
    <location>
        <begin position="6"/>
        <end position="26"/>
    </location>
</feature>
<feature type="binding site" description="axial binding residue" evidence="1">
    <location>
        <position position="439"/>
    </location>
    <ligand>
        <name>heme</name>
        <dbReference type="ChEBI" id="CHEBI:30413"/>
    </ligand>
    <ligandPart>
        <name>Fe</name>
        <dbReference type="ChEBI" id="CHEBI:18248"/>
    </ligandPart>
</feature>
<comment type="function">
    <text evidence="3">Catalyzes three successive oxidations of ent-kaurenoic acid giving gibberellin 12 (GA12), a key step in gibberellins (GAs) biosynthesis. GAs, which are involved many processes, including stem elongation, play a central role in plant development.</text>
</comment>
<comment type="catalytic activity">
    <reaction evidence="3">
        <text>ent-kaur-16-en-19-oate + 3 reduced [NADPH--hemoprotein reductase] + 3 O2 = gibberellin A12 + 3 oxidized [NADPH--hemoprotein reductase] + 4 H2O + 4 H(+)</text>
        <dbReference type="Rhea" id="RHEA:33219"/>
        <dbReference type="Rhea" id="RHEA-COMP:11964"/>
        <dbReference type="Rhea" id="RHEA-COMP:11965"/>
        <dbReference type="ChEBI" id="CHEBI:15377"/>
        <dbReference type="ChEBI" id="CHEBI:15378"/>
        <dbReference type="ChEBI" id="CHEBI:15379"/>
        <dbReference type="ChEBI" id="CHEBI:57297"/>
        <dbReference type="ChEBI" id="CHEBI:57618"/>
        <dbReference type="ChEBI" id="CHEBI:58210"/>
        <dbReference type="ChEBI" id="CHEBI:58627"/>
        <dbReference type="EC" id="1.14.14.107"/>
    </reaction>
    <physiologicalReaction direction="left-to-right" evidence="3">
        <dbReference type="Rhea" id="RHEA:33220"/>
    </physiologicalReaction>
</comment>
<comment type="catalytic activity">
    <reaction evidence="3">
        <text>ent-kaur-16-en-19-oate + reduced [NADPH--hemoprotein reductase] + O2 = ent-7alpha-hydroxykaur-16-en-19-oate + oxidized [NADPH--hemoprotein reductase] + H2O + H(+)</text>
        <dbReference type="Rhea" id="RHEA:19241"/>
        <dbReference type="Rhea" id="RHEA-COMP:11964"/>
        <dbReference type="Rhea" id="RHEA-COMP:11965"/>
        <dbReference type="ChEBI" id="CHEBI:15377"/>
        <dbReference type="ChEBI" id="CHEBI:15378"/>
        <dbReference type="ChEBI" id="CHEBI:15379"/>
        <dbReference type="ChEBI" id="CHEBI:57297"/>
        <dbReference type="ChEBI" id="CHEBI:57298"/>
        <dbReference type="ChEBI" id="CHEBI:57618"/>
        <dbReference type="ChEBI" id="CHEBI:58210"/>
    </reaction>
    <physiologicalReaction direction="left-to-right" evidence="3">
        <dbReference type="Rhea" id="RHEA:19242"/>
    </physiologicalReaction>
</comment>
<comment type="catalytic activity">
    <reaction evidence="3">
        <text>ent-7alpha-hydroxykaur-16-en-19-oate + reduced [NADPH--hemoprotein reductase] + O2 = gibberellin A12 aldehyde + oxidized [NADPH--hemoprotein reductase] + 2 H2O + H(+)</text>
        <dbReference type="Rhea" id="RHEA:22904"/>
        <dbReference type="Rhea" id="RHEA-COMP:11964"/>
        <dbReference type="Rhea" id="RHEA-COMP:11965"/>
        <dbReference type="ChEBI" id="CHEBI:15377"/>
        <dbReference type="ChEBI" id="CHEBI:15378"/>
        <dbReference type="ChEBI" id="CHEBI:15379"/>
        <dbReference type="ChEBI" id="CHEBI:57298"/>
        <dbReference type="ChEBI" id="CHEBI:57432"/>
        <dbReference type="ChEBI" id="CHEBI:57618"/>
        <dbReference type="ChEBI" id="CHEBI:58210"/>
    </reaction>
    <physiologicalReaction direction="left-to-right" evidence="3">
        <dbReference type="Rhea" id="RHEA:22905"/>
    </physiologicalReaction>
</comment>
<comment type="catalytic activity">
    <reaction evidence="3">
        <text>gibberellin A12 aldehyde + reduced [NADPH--hemoprotein reductase] + O2 = gibberellin A12 + oxidized [NADPH--hemoprotein reductase] + H2O + 2 H(+)</text>
        <dbReference type="Rhea" id="RHEA:22700"/>
        <dbReference type="Rhea" id="RHEA-COMP:11964"/>
        <dbReference type="Rhea" id="RHEA-COMP:11965"/>
        <dbReference type="ChEBI" id="CHEBI:15377"/>
        <dbReference type="ChEBI" id="CHEBI:15378"/>
        <dbReference type="ChEBI" id="CHEBI:15379"/>
        <dbReference type="ChEBI" id="CHEBI:57432"/>
        <dbReference type="ChEBI" id="CHEBI:57618"/>
        <dbReference type="ChEBI" id="CHEBI:58210"/>
        <dbReference type="ChEBI" id="CHEBI:58627"/>
    </reaction>
    <physiologicalReaction direction="left-to-right" evidence="3">
        <dbReference type="Rhea" id="RHEA:22701"/>
    </physiologicalReaction>
</comment>
<comment type="cofactor">
    <cofactor evidence="1">
        <name>heme</name>
        <dbReference type="ChEBI" id="CHEBI:30413"/>
    </cofactor>
</comment>
<comment type="pathway">
    <text evidence="3">Plant hormone biosynthesis; gibberellin biosynthesis.</text>
</comment>
<comment type="subcellular location">
    <subcellularLocation>
        <location evidence="4">Endoplasmic reticulum membrane</location>
        <topology evidence="4">Single-pass membrane protein</topology>
    </subcellularLocation>
</comment>
<comment type="tissue specificity">
    <text evidence="3">Widely expressed. Highly expressed in influorescence stem, influorescence, and silique tissue. Weakly expressed in cauline and rosette leaves. Expressed at a higher level in stem and influorescence than AtKAO2/CYP88A4.</text>
</comment>
<comment type="similarity">
    <text evidence="6">Belongs to the cytochrome P450 family.</text>
</comment>
<evidence type="ECO:0000250" key="1">
    <source>
        <dbReference type="UniProtKB" id="P04798"/>
    </source>
</evidence>
<evidence type="ECO:0000255" key="2"/>
<evidence type="ECO:0000269" key="3">
    <source>
    </source>
</evidence>
<evidence type="ECO:0000269" key="4">
    <source>
    </source>
</evidence>
<evidence type="ECO:0000303" key="5">
    <source>
    </source>
</evidence>
<evidence type="ECO:0000305" key="6"/>
<evidence type="ECO:0000312" key="7">
    <source>
        <dbReference type="Araport" id="AT1G05160"/>
    </source>
</evidence>
<evidence type="ECO:0000312" key="8">
    <source>
        <dbReference type="EMBL" id="AAB71462.1"/>
    </source>
</evidence>
<dbReference type="EC" id="1.14.14.107" evidence="3"/>
<dbReference type="EMBL" id="AF318500">
    <property type="protein sequence ID" value="AAK11564.1"/>
    <property type="molecule type" value="mRNA"/>
</dbReference>
<dbReference type="EMBL" id="AC000098">
    <property type="protein sequence ID" value="AAB71462.1"/>
    <property type="molecule type" value="Genomic_DNA"/>
</dbReference>
<dbReference type="EMBL" id="CP002684">
    <property type="protein sequence ID" value="AEE27796.1"/>
    <property type="molecule type" value="Genomic_DNA"/>
</dbReference>
<dbReference type="EMBL" id="CP002684">
    <property type="protein sequence ID" value="ANM57713.1"/>
    <property type="molecule type" value="Genomic_DNA"/>
</dbReference>
<dbReference type="PIR" id="H86185">
    <property type="entry name" value="H86185"/>
</dbReference>
<dbReference type="RefSeq" id="NP_001320198.1">
    <property type="nucleotide sequence ID" value="NM_001331521.1"/>
</dbReference>
<dbReference type="RefSeq" id="NP_172008.1">
    <property type="nucleotide sequence ID" value="NM_100394.4"/>
</dbReference>
<dbReference type="SMR" id="O23051"/>
<dbReference type="BioGRID" id="24546">
    <property type="interactions" value="1"/>
</dbReference>
<dbReference type="FunCoup" id="O23051">
    <property type="interactions" value="284"/>
</dbReference>
<dbReference type="STRING" id="3702.O23051"/>
<dbReference type="PaxDb" id="3702-AT1G05160.1"/>
<dbReference type="ProteomicsDB" id="250629"/>
<dbReference type="EnsemblPlants" id="AT1G05160.1">
    <property type="protein sequence ID" value="AT1G05160.1"/>
    <property type="gene ID" value="AT1G05160"/>
</dbReference>
<dbReference type="EnsemblPlants" id="AT1G05160.2">
    <property type="protein sequence ID" value="AT1G05160.2"/>
    <property type="gene ID" value="AT1G05160"/>
</dbReference>
<dbReference type="GeneID" id="839311"/>
<dbReference type="Gramene" id="AT1G05160.1">
    <property type="protein sequence ID" value="AT1G05160.1"/>
    <property type="gene ID" value="AT1G05160"/>
</dbReference>
<dbReference type="Gramene" id="AT1G05160.2">
    <property type="protein sequence ID" value="AT1G05160.2"/>
    <property type="gene ID" value="AT1G05160"/>
</dbReference>
<dbReference type="KEGG" id="ath:AT1G05160"/>
<dbReference type="Araport" id="AT1G05160"/>
<dbReference type="TAIR" id="AT1G05160">
    <property type="gene designation" value="CYP88A3"/>
</dbReference>
<dbReference type="eggNOG" id="KOG0157">
    <property type="taxonomic scope" value="Eukaryota"/>
</dbReference>
<dbReference type="HOGENOM" id="CLU_001570_15_5_1"/>
<dbReference type="InParanoid" id="O23051"/>
<dbReference type="OMA" id="KLWEVYM"/>
<dbReference type="PhylomeDB" id="O23051"/>
<dbReference type="BioCyc" id="ARA:AT1G05160-MONOMER"/>
<dbReference type="BioCyc" id="MetaCyc:AT1G05160-MONOMER"/>
<dbReference type="BRENDA" id="1.14.13.79">
    <property type="organism ID" value="399"/>
</dbReference>
<dbReference type="BRENDA" id="1.14.14.107">
    <property type="organism ID" value="399"/>
</dbReference>
<dbReference type="UniPathway" id="UPA00390"/>
<dbReference type="PRO" id="PR:O23051"/>
<dbReference type="Proteomes" id="UP000006548">
    <property type="component" value="Chromosome 1"/>
</dbReference>
<dbReference type="ExpressionAtlas" id="O23051">
    <property type="expression patterns" value="baseline and differential"/>
</dbReference>
<dbReference type="GO" id="GO:0005783">
    <property type="term" value="C:endoplasmic reticulum"/>
    <property type="evidence" value="ECO:0000314"/>
    <property type="project" value="TAIR"/>
</dbReference>
<dbReference type="GO" id="GO:0005789">
    <property type="term" value="C:endoplasmic reticulum membrane"/>
    <property type="evidence" value="ECO:0007669"/>
    <property type="project" value="UniProtKB-SubCell"/>
</dbReference>
<dbReference type="GO" id="GO:0051777">
    <property type="term" value="F:ent-kaurenoic acid monooxygenase activity"/>
    <property type="evidence" value="ECO:0000314"/>
    <property type="project" value="TAIR"/>
</dbReference>
<dbReference type="GO" id="GO:0020037">
    <property type="term" value="F:heme binding"/>
    <property type="evidence" value="ECO:0007669"/>
    <property type="project" value="InterPro"/>
</dbReference>
<dbReference type="GO" id="GO:0005506">
    <property type="term" value="F:iron ion binding"/>
    <property type="evidence" value="ECO:0007669"/>
    <property type="project" value="InterPro"/>
</dbReference>
<dbReference type="GO" id="GO:0009686">
    <property type="term" value="P:gibberellin biosynthetic process"/>
    <property type="evidence" value="ECO:0000304"/>
    <property type="project" value="TAIR"/>
</dbReference>
<dbReference type="CDD" id="cd11043">
    <property type="entry name" value="CYP90-like"/>
    <property type="match status" value="1"/>
</dbReference>
<dbReference type="FunFam" id="1.10.630.10:FF:000052">
    <property type="entry name" value="Ent-kaurenoic acid oxidase"/>
    <property type="match status" value="1"/>
</dbReference>
<dbReference type="Gene3D" id="1.10.630.10">
    <property type="entry name" value="Cytochrome P450"/>
    <property type="match status" value="1"/>
</dbReference>
<dbReference type="InterPro" id="IPR001128">
    <property type="entry name" value="Cyt_P450"/>
</dbReference>
<dbReference type="InterPro" id="IPR002397">
    <property type="entry name" value="Cyt_P450_B"/>
</dbReference>
<dbReference type="InterPro" id="IPR017972">
    <property type="entry name" value="Cyt_P450_CS"/>
</dbReference>
<dbReference type="InterPro" id="IPR036396">
    <property type="entry name" value="Cyt_P450_sf"/>
</dbReference>
<dbReference type="PANTHER" id="PTHR24286">
    <property type="entry name" value="CYTOCHROME P450 26"/>
    <property type="match status" value="1"/>
</dbReference>
<dbReference type="PANTHER" id="PTHR24286:SF225">
    <property type="entry name" value="ENT-KAURENOIC ACID OXIDASE 1"/>
    <property type="match status" value="1"/>
</dbReference>
<dbReference type="Pfam" id="PF00067">
    <property type="entry name" value="p450"/>
    <property type="match status" value="1"/>
</dbReference>
<dbReference type="PRINTS" id="PR00359">
    <property type="entry name" value="BP450"/>
</dbReference>
<dbReference type="PRINTS" id="PR00385">
    <property type="entry name" value="P450"/>
</dbReference>
<dbReference type="SUPFAM" id="SSF48264">
    <property type="entry name" value="Cytochrome P450"/>
    <property type="match status" value="1"/>
</dbReference>
<dbReference type="PROSITE" id="PS00086">
    <property type="entry name" value="CYTOCHROME_P450"/>
    <property type="match status" value="1"/>
</dbReference>
<sequence length="490" mass="56409">MAETTSWIPVWFPLMVLGCFGLNWLVRKVNVWLYESSLGENRHYLPPGDLGWPFIGNMLSFLRAFKTSDPDSFTRTLIKRYGPKGIYKAHMFGNPSIIVTTSDTCRRVLTDDDAFKPGWPTSTMELIGRKSFVGISFEEHKRLRRLTAAPVNGHEALSTYIPYIEENVITVLDKWTKMGEFEFLTHLRKLTFRIIMYIFLSSESENVMDALEREYTALNYGVRAMAVNIPGFAYHRALKARKTLVAAFQSIVTERRNQRKQNILSNKKDMLDNLLNVKDEDGKTLDDEEIIDVLLMYLNAGHESSGHTIMWATVFLQEHPEVLQRAKAEQEMILKSRPEGQKGLSLKETRKMEFLSQVVDETLRVITFSLTAFREAKTDVEMNGYLIPKGWKVLTWFRDVHIDPEVFPDPRKFDPARWDNGFVPKAGAFLPFGAGSHLCPGNDLAKLEISIFLHHFLLKYQVKRSNPECPVMYLPHTRPTDNCLARISYQ</sequence>